<comment type="function">
    <text evidence="9 10 11 12">Regulator that plays a central role in regulation of apoptosis and cell growth via its interactions with proteins such as TP53 (PubMed:12524540). Regulates TP53 by enhancing the DNA binding and transactivation function of TP53 on the promoters of proapoptotic genes in vivo. Inhibits the ability of NAE1 to conjugate NEDD8 to CUL1, and thereby decreases NAE1 ability to induce apoptosis. Impedes cell cycle progression at G2/M. Its apoptosis-stimulating activity is inhibited by its interaction with DDX42.</text>
</comment>
<comment type="subunit">
    <text evidence="5 7 9 10 11 12 13 14">Interacts with P53/TP53; the interaction promotes pro-apoptotic activity (PubMed:11684014, PubMed:12524540, PubMed:8016121). Interacts with BCL2 (PubMed:8668206). Interacts with protein phosphatase 1. Interacts with RELA NF-kappa-B subunit. This interaction probably prevents the activation of apoptosis, possibly by preventing its interaction with TP53. Interacts with APC2 and NAE1. Interacts with DDX42 (via the C-terminus); the interaction is not inhibited by TP53BP2 ubiquitination and is independent of p53/TP53.</text>
</comment>
<comment type="interaction">
    <interactant intactId="EBI-77642">
        <id>Q13625</id>
    </interactant>
    <interactant intactId="EBI-1053045">
        <id>O95996</id>
        <label>APC2</label>
    </interactant>
    <organismsDiffer>false</organismsDiffer>
    <experiments>4</experiments>
</comment>
<comment type="interaction">
    <interactant intactId="EBI-77642">
        <id>Q13625</id>
    </interactant>
    <interactant intactId="EBI-77613">
        <id>P05067</id>
        <label>APP</label>
    </interactant>
    <organismsDiffer>false</organismsDiffer>
    <experiments>3</experiments>
</comment>
<comment type="interaction">
    <interactant intactId="EBI-77642">
        <id>Q13625</id>
    </interactant>
    <interactant intactId="EBI-77694">
        <id>P10415</id>
        <label>BCL2</label>
    </interactant>
    <organismsDiffer>false</organismsDiffer>
    <experiments>10</experiments>
</comment>
<comment type="interaction">
    <interactant intactId="EBI-77642">
        <id>Q13625</id>
    </interactant>
    <interactant intactId="EBI-287195">
        <id>Q07817-1</id>
        <label>BCL2L1</label>
    </interactant>
    <organismsDiffer>false</organismsDiffer>
    <experiments>3</experiments>
</comment>
<comment type="interaction">
    <interactant intactId="EBI-77642">
        <id>Q13625</id>
    </interactant>
    <interactant intactId="EBI-707714">
        <id>Q92843</id>
        <label>BCL2L2</label>
    </interactant>
    <organismsDiffer>false</organismsDiffer>
    <experiments>4</experiments>
</comment>
<comment type="interaction">
    <interactant intactId="EBI-77642">
        <id>Q13625</id>
    </interactant>
    <interactant intactId="EBI-491549">
        <id>P35222</id>
        <label>CTNNB1</label>
    </interactant>
    <organismsDiffer>false</organismsDiffer>
    <experiments>5</experiments>
</comment>
<comment type="interaction">
    <interactant intactId="EBI-77642">
        <id>Q13625</id>
    </interactant>
    <interactant intactId="EBI-447295">
        <id>Q09472</id>
        <label>EP300</label>
    </interactant>
    <organismsDiffer>false</organismsDiffer>
    <experiments>2</experiments>
</comment>
<comment type="interaction">
    <interactant intactId="EBI-77642">
        <id>Q13625</id>
    </interactant>
    <interactant intactId="EBI-1564678">
        <id>Q96J02</id>
        <label>ITCH</label>
    </interactant>
    <organismsDiffer>false</organismsDiffer>
    <experiments>2</experiments>
</comment>
<comment type="interaction">
    <interactant intactId="EBI-77642">
        <id>Q13625</id>
    </interactant>
    <interactant intactId="EBI-357253">
        <id>P62136</id>
        <label>PPP1CA</label>
    </interactant>
    <organismsDiffer>false</organismsDiffer>
    <experiments>10</experiments>
</comment>
<comment type="interaction">
    <interactant intactId="EBI-77642">
        <id>Q13625</id>
    </interactant>
    <interactant intactId="EBI-356283">
        <id>P36873</id>
        <label>PPP1CC</label>
    </interactant>
    <organismsDiffer>false</organismsDiffer>
    <experiments>11</experiments>
</comment>
<comment type="interaction">
    <interactant intactId="EBI-77642">
        <id>Q13625</id>
    </interactant>
    <interactant intactId="EBI-286642">
        <id>P62826</id>
        <label>RAN</label>
    </interactant>
    <organismsDiffer>false</organismsDiffer>
    <experiments>5</experiments>
</comment>
<comment type="interaction">
    <interactant intactId="EBI-77642">
        <id>Q13625</id>
    </interactant>
    <interactant intactId="EBI-73886">
        <id>Q04206</id>
        <label>RELA</label>
    </interactant>
    <organismsDiffer>false</organismsDiffer>
    <experiments>4</experiments>
</comment>
<comment type="interaction">
    <interactant intactId="EBI-77642">
        <id>Q13625</id>
    </interactant>
    <interactant intactId="EBI-366083">
        <id>P04637</id>
        <label>TP53</label>
    </interactant>
    <organismsDiffer>false</organismsDiffer>
    <experiments>9</experiments>
</comment>
<comment type="interaction">
    <interactant intactId="EBI-77642">
        <id>Q13625</id>
    </interactant>
    <interactant intactId="EBI-77642">
        <id>Q13625</id>
        <label>TP53BP2</label>
    </interactant>
    <organismsDiffer>false</organismsDiffer>
    <experiments>7</experiments>
</comment>
<comment type="interaction">
    <interactant intactId="EBI-77642">
        <id>Q13625</id>
    </interactant>
    <interactant intactId="EBI-2337775">
        <id>Q9H3D4</id>
        <label>TP63</label>
    </interactant>
    <organismsDiffer>false</organismsDiffer>
    <experiments>2</experiments>
</comment>
<comment type="interaction">
    <interactant intactId="EBI-77642">
        <id>Q13625</id>
    </interactant>
    <interactant intactId="EBI-389606">
        <id>O15350</id>
        <label>TP73</label>
    </interactant>
    <organismsDiffer>false</organismsDiffer>
    <experiments>2</experiments>
</comment>
<comment type="interaction">
    <interactant intactId="EBI-77642">
        <id>Q13625</id>
    </interactant>
    <interactant intactId="EBI-347088">
        <id>P63104</id>
        <label>YWHAZ</label>
    </interactant>
    <organismsDiffer>false</organismsDiffer>
    <experiments>5</experiments>
</comment>
<comment type="interaction">
    <interactant intactId="EBI-77642">
        <id>Q13625</id>
    </interactant>
    <interactant intactId="EBI-6377335">
        <id>PRO_0000037566</id>
        <dbReference type="UniProtKB" id="P27958"/>
    </interactant>
    <organismsDiffer>true</organismsDiffer>
    <experiments>5</experiments>
</comment>
<comment type="interaction">
    <interactant intactId="EBI-287091">
        <id>Q13625-2</id>
    </interactant>
    <interactant intactId="EBI-73886">
        <id>Q04206</id>
        <label>RELA</label>
    </interactant>
    <organismsDiffer>false</organismsDiffer>
    <experiments>6</experiments>
</comment>
<comment type="interaction">
    <interactant intactId="EBI-287091">
        <id>Q13625-2</id>
    </interactant>
    <interactant intactId="EBI-1044059">
        <id>P46937</id>
        <label>YAP1</label>
    </interactant>
    <organismsDiffer>false</organismsDiffer>
    <experiments>9</experiments>
</comment>
<comment type="interaction">
    <interactant intactId="EBI-287091">
        <id>Q13625-2</id>
    </interactant>
    <interactant intactId="EBI-400825">
        <id>P35569</id>
        <label>Irs1</label>
    </interactant>
    <organismsDiffer>true</organismsDiffer>
    <experiments>2</experiments>
</comment>
<comment type="interaction">
    <interactant intactId="EBI-287091">
        <id>Q13625-2</id>
    </interactant>
    <interactant intactId="EBI-520230">
        <id>P35570</id>
        <label>Irs1</label>
    </interactant>
    <organismsDiffer>true</organismsDiffer>
    <experiments>4</experiments>
</comment>
<comment type="interaction">
    <interactant intactId="EBI-287091">
        <id>Q13625-2</id>
    </interactant>
    <interactant intactId="EBI-7804091">
        <id>P46936</id>
        <label>YAP1</label>
    </interactant>
    <organismsDiffer>true</organismsDiffer>
    <experiments>6</experiments>
</comment>
<comment type="interaction">
    <interactant intactId="EBI-10175039">
        <id>Q13625-3</id>
    </interactant>
    <interactant intactId="EBI-1166928">
        <id>Q8N5M1</id>
        <label>ATPAF2</label>
    </interactant>
    <organismsDiffer>false</organismsDiffer>
    <experiments>3</experiments>
</comment>
<comment type="interaction">
    <interactant intactId="EBI-10175039">
        <id>Q13625-3</id>
    </interactant>
    <interactant intactId="EBI-525456">
        <id>Q9UQB8</id>
        <label>BAIAP2</label>
    </interactant>
    <organismsDiffer>false</organismsDiffer>
    <experiments>3</experiments>
</comment>
<comment type="interaction">
    <interactant intactId="EBI-10175039">
        <id>Q13625-3</id>
    </interactant>
    <interactant intactId="EBI-719994">
        <id>Q53HC0</id>
        <label>CCDC92</label>
    </interactant>
    <organismsDiffer>false</organismsDiffer>
    <experiments>3</experiments>
</comment>
<comment type="interaction">
    <interactant intactId="EBI-10175039">
        <id>Q13625-3</id>
    </interactant>
    <interactant intactId="EBI-5453285">
        <id>Q2TBE0</id>
        <label>CWF19L2</label>
    </interactant>
    <organismsDiffer>false</organismsDiffer>
    <experiments>3</experiments>
</comment>
<comment type="interaction">
    <interactant intactId="EBI-10175039">
        <id>Q13625-3</id>
    </interactant>
    <interactant intactId="EBI-740086">
        <id>Q96GG9</id>
        <label>DCUN1D1</label>
    </interactant>
    <organismsDiffer>false</organismsDiffer>
    <experiments>3</experiments>
</comment>
<comment type="interaction">
    <interactant intactId="EBI-10175039">
        <id>Q13625-3</id>
    </interactant>
    <interactant intactId="EBI-401755">
        <id>P62993</id>
        <label>GRB2</label>
    </interactant>
    <organismsDiffer>false</organismsDiffer>
    <experiments>3</experiments>
</comment>
<comment type="interaction">
    <interactant intactId="EBI-10175039">
        <id>Q13625-3</id>
    </interactant>
    <interactant intactId="EBI-354552">
        <id>P62807</id>
        <label>H2BC8</label>
    </interactant>
    <organismsDiffer>false</organismsDiffer>
    <experiments>3</experiments>
</comment>
<comment type="interaction">
    <interactant intactId="EBI-10175039">
        <id>Q13625-3</id>
    </interactant>
    <interactant intactId="EBI-1018153">
        <id>Q9BUJ2</id>
        <label>HNRNPUL1</label>
    </interactant>
    <organismsDiffer>false</organismsDiffer>
    <experiments>3</experiments>
</comment>
<comment type="interaction">
    <interactant intactId="EBI-10175039">
        <id>Q13625-3</id>
    </interactant>
    <interactant intactId="EBI-2798728">
        <id>P61968</id>
        <label>LMO4</label>
    </interactant>
    <organismsDiffer>false</organismsDiffer>
    <experiments>3</experiments>
</comment>
<comment type="interaction">
    <interactant intactId="EBI-10175039">
        <id>Q13625-3</id>
    </interactant>
    <interactant intactId="EBI-5658424">
        <id>Q8NCE2</id>
        <label>MTMR14</label>
    </interactant>
    <organismsDiffer>false</organismsDiffer>
    <experiments>3</experiments>
</comment>
<comment type="interaction">
    <interactant intactId="EBI-10175039">
        <id>Q13625-3</id>
    </interactant>
    <interactant intactId="EBI-715849">
        <id>O14777</id>
        <label>NDC80</label>
    </interactant>
    <organismsDiffer>false</organismsDiffer>
    <experiments>3</experiments>
</comment>
<comment type="interaction">
    <interactant intactId="EBI-10175039">
        <id>Q13625-3</id>
    </interactant>
    <interactant intactId="EBI-10178410">
        <id>Q86Y26</id>
        <label>NUTM1</label>
    </interactant>
    <organismsDiffer>false</organismsDiffer>
    <experiments>3</experiments>
</comment>
<comment type="interaction">
    <interactant intactId="EBI-10175039">
        <id>Q13625-3</id>
    </interactant>
    <interactant intactId="EBI-398874">
        <id>Q9UBU9</id>
        <label>NXF1</label>
    </interactant>
    <organismsDiffer>false</organismsDiffer>
    <experiments>3</experiments>
</comment>
<comment type="interaction">
    <interactant intactId="EBI-10175039">
        <id>Q13625-3</id>
    </interactant>
    <interactant intactId="EBI-746259">
        <id>Q96DC9</id>
        <label>OTUB2</label>
    </interactant>
    <organismsDiffer>false</organismsDiffer>
    <experiments>3</experiments>
</comment>
<comment type="interaction">
    <interactant intactId="EBI-10175039">
        <id>Q13625-3</id>
    </interactant>
    <interactant intactId="EBI-10241513">
        <id>Q494U1</id>
        <label>PLEKHN1</label>
    </interactant>
    <organismsDiffer>false</organismsDiffer>
    <experiments>3</experiments>
</comment>
<comment type="interaction">
    <interactant intactId="EBI-10175039">
        <id>Q13625-3</id>
    </interactant>
    <interactant intactId="EBI-359527">
        <id>P62875</id>
        <label>POLR2L</label>
    </interactant>
    <organismsDiffer>false</organismsDiffer>
    <experiments>3</experiments>
</comment>
<comment type="interaction">
    <interactant intactId="EBI-10175039">
        <id>Q13625-3</id>
    </interactant>
    <interactant intactId="EBI-352350">
        <id>P62140</id>
        <label>PPP1CB</label>
    </interactant>
    <organismsDiffer>false</organismsDiffer>
    <experiments>3</experiments>
</comment>
<comment type="interaction">
    <interactant intactId="EBI-10175039">
        <id>Q13625-3</id>
    </interactant>
    <interactant intactId="EBI-356283">
        <id>P36873</id>
        <label>PPP1CC</label>
    </interactant>
    <organismsDiffer>false</organismsDiffer>
    <experiments>3</experiments>
</comment>
<comment type="interaction">
    <interactant intactId="EBI-10175039">
        <id>Q13625-3</id>
    </interactant>
    <interactant intactId="EBI-1567797">
        <id>Q8WWY3</id>
        <label>PRPF31</label>
    </interactant>
    <organismsDiffer>false</organismsDiffer>
    <experiments>3</experiments>
</comment>
<comment type="interaction">
    <interactant intactId="EBI-10175039">
        <id>Q13625-3</id>
    </interactant>
    <interactant intactId="EBI-747107">
        <id>Q8IUQ4</id>
        <label>SIAH1</label>
    </interactant>
    <organismsDiffer>false</organismsDiffer>
    <experiments>3</experiments>
</comment>
<comment type="interaction">
    <interactant intactId="EBI-10175039">
        <id>Q13625-3</id>
    </interactant>
    <interactant intactId="EBI-2212028">
        <id>Q9Y2D8</id>
        <label>SSX2IP</label>
    </interactant>
    <organismsDiffer>false</organismsDiffer>
    <experiments>3</experiments>
</comment>
<comment type="interaction">
    <interactant intactId="EBI-10175039">
        <id>Q13625-3</id>
    </interactant>
    <interactant intactId="EBI-356349">
        <id>Q92844</id>
        <label>TANK</label>
    </interactant>
    <organismsDiffer>false</organismsDiffer>
    <experiments>3</experiments>
</comment>
<comment type="interaction">
    <interactant intactId="EBI-10175039">
        <id>Q13625-3</id>
    </interactant>
    <interactant intactId="EBI-8787464">
        <id>Q9NU19</id>
        <label>TBC1D22B</label>
    </interactant>
    <organismsDiffer>false</organismsDiffer>
    <experiments>3</experiments>
</comment>
<comment type="interaction">
    <interactant intactId="EBI-10175039">
        <id>Q13625-3</id>
    </interactant>
    <interactant intactId="EBI-749995">
        <id>P56279</id>
        <label>TCL1A</label>
    </interactant>
    <organismsDiffer>false</organismsDiffer>
    <experiments>3</experiments>
</comment>
<comment type="interaction">
    <interactant intactId="EBI-10175039">
        <id>Q13625-3</id>
    </interactant>
    <interactant intactId="EBI-3650647">
        <id>Q9BUZ4</id>
        <label>TRAF4</label>
    </interactant>
    <organismsDiffer>false</organismsDiffer>
    <experiments>3</experiments>
</comment>
<comment type="interaction">
    <interactant intactId="EBI-10175039">
        <id>Q13625-3</id>
    </interactant>
    <interactant intactId="EBI-359793">
        <id>P40222</id>
        <label>TXLNA</label>
    </interactant>
    <organismsDiffer>false</organismsDiffer>
    <experiments>3</experiments>
</comment>
<comment type="interaction">
    <interactant intactId="EBI-10175039">
        <id>Q13625-3</id>
    </interactant>
    <interactant intactId="EBI-2105393">
        <id>P57075</id>
        <label>UBASH3A</label>
    </interactant>
    <organismsDiffer>false</organismsDiffer>
    <experiments>3</experiments>
</comment>
<comment type="interaction">
    <interactant intactId="EBI-10175039">
        <id>Q13625-3</id>
    </interactant>
    <interactant intactId="EBI-3439227">
        <id>Q8N5A5</id>
        <label>ZGPAT</label>
    </interactant>
    <organismsDiffer>false</organismsDiffer>
    <experiments>3</experiments>
</comment>
<comment type="interaction">
    <interactant intactId="EBI-10175039">
        <id>Q13625-3</id>
    </interactant>
    <interactant intactId="EBI-10183064">
        <id>Q8N5A5-2</id>
        <label>ZGPAT</label>
    </interactant>
    <organismsDiffer>false</organismsDiffer>
    <experiments>3</experiments>
</comment>
<comment type="interaction">
    <interactant intactId="EBI-10175039">
        <id>Q13625-3</id>
    </interactant>
    <interactant intactId="EBI-2841331">
        <id>P17031</id>
        <label>ZNF26</label>
    </interactant>
    <organismsDiffer>false</organismsDiffer>
    <experiments>5</experiments>
</comment>
<comment type="subcellular location">
    <subcellularLocation>
        <location>Cytoplasm</location>
        <location>Perinuclear region</location>
    </subcellularLocation>
    <subcellularLocation>
        <location>Nucleus</location>
    </subcellularLocation>
    <text>Predominantly found in the perinuclear region. Some small fraction is nuclear. Sequester in the cytoplasm on overexpression of DDX42.</text>
</comment>
<comment type="alternative products">
    <event type="alternative splicing"/>
    <isoform>
        <id>Q13625-1</id>
        <name>1</name>
        <sequence type="displayed"/>
    </isoform>
    <isoform>
        <id>Q13625-2</id>
        <name>2</name>
        <name>Bbp</name>
        <sequence type="described" ref="VSP_008010"/>
    </isoform>
    <isoform>
        <id>Q13625-3</id>
        <name>3</name>
        <sequence type="described" ref="VSP_043509"/>
    </isoform>
</comment>
<comment type="tissue specificity">
    <text evidence="5 6 9">Widely expressed. Expressed in spleen, thymus, prostate, testis, ovary, small intestine, colon and peripheral blood leukocyte. Reduced expression in breast carcinomas expressing a wild-type TP53 protein. Overexpressed in lung cancer cell lines.</text>
</comment>
<comment type="induction">
    <text evidence="8">Following DNA damage induced by UV irradiation. Down-regulated by wild-type, but not mutant, p53/TP53.</text>
</comment>
<comment type="domain">
    <text>The ankyrin repeats and the SH3 domain are required for a specific interactions with TP53.</text>
</comment>
<comment type="miscellaneous">
    <molecule>Isoform 2</molecule>
    <text evidence="17">Due to Alu sequence insertion that creates a shorter but existing form that may have an alternative function.</text>
</comment>
<comment type="similarity">
    <text evidence="17">Belongs to the ASPP family.</text>
</comment>
<comment type="sequence caution" evidence="17">
    <conflict type="erroneous initiation">
        <sequence resource="EMBL-CDS" id="AAH46150"/>
    </conflict>
    <text>Extended N-terminus.</text>
</comment>
<comment type="sequence caution" evidence="17">
    <conflict type="miscellaneous discrepancy">
        <sequence resource="EMBL-CDS" id="AAH46150"/>
    </conflict>
    <text>Contaminating sequence. Potential poly-A sequence.</text>
</comment>
<comment type="sequence caution" evidence="17">
    <conflict type="erroneous initiation">
        <sequence resource="EMBL-CDS" id="AAH58918"/>
    </conflict>
</comment>
<comment type="online information" name="Atlas of Genetics and Cytogenetics in Oncology and Haematology">
    <link uri="https://atlasgeneticsoncology.org/gene/42667/TP53BP2"/>
</comment>
<name>ASPP2_HUMAN</name>
<proteinExistence type="evidence at protein level"/>
<organism>
    <name type="scientific">Homo sapiens</name>
    <name type="common">Human</name>
    <dbReference type="NCBI Taxonomy" id="9606"/>
    <lineage>
        <taxon>Eukaryota</taxon>
        <taxon>Metazoa</taxon>
        <taxon>Chordata</taxon>
        <taxon>Craniata</taxon>
        <taxon>Vertebrata</taxon>
        <taxon>Euteleostomi</taxon>
        <taxon>Mammalia</taxon>
        <taxon>Eutheria</taxon>
        <taxon>Euarchontoglires</taxon>
        <taxon>Primates</taxon>
        <taxon>Haplorrhini</taxon>
        <taxon>Catarrhini</taxon>
        <taxon>Hominidae</taxon>
        <taxon>Homo</taxon>
    </lineage>
</organism>
<dbReference type="EMBL" id="U58334">
    <property type="protein sequence ID" value="AAC50557.1"/>
    <property type="molecule type" value="mRNA"/>
</dbReference>
<dbReference type="EMBL" id="AJ318888">
    <property type="protein sequence ID" value="CAC83012.1"/>
    <property type="molecule type" value="mRNA"/>
</dbReference>
<dbReference type="EMBL" id="AK294432">
    <property type="protein sequence ID" value="BAG57677.1"/>
    <property type="molecule type" value="mRNA"/>
</dbReference>
<dbReference type="EMBL" id="AC096542">
    <property type="status" value="NOT_ANNOTATED_CDS"/>
    <property type="molecule type" value="Genomic_DNA"/>
</dbReference>
<dbReference type="EMBL" id="BC046150">
    <property type="protein sequence ID" value="AAH46150.2"/>
    <property type="status" value="ALT_SEQ"/>
    <property type="molecule type" value="mRNA"/>
</dbReference>
<dbReference type="EMBL" id="BC058918">
    <property type="protein sequence ID" value="AAH58918.2"/>
    <property type="status" value="ALT_INIT"/>
    <property type="molecule type" value="mRNA"/>
</dbReference>
<dbReference type="EMBL" id="U09582">
    <property type="protein sequence ID" value="AAA21597.1"/>
    <property type="molecule type" value="mRNA"/>
</dbReference>
<dbReference type="CCDS" id="CCDS1538.1">
    <molecule id="Q13625-2"/>
</dbReference>
<dbReference type="CCDS" id="CCDS44319.1">
    <molecule id="Q13625-3"/>
</dbReference>
<dbReference type="PIR" id="I38607">
    <property type="entry name" value="I38607"/>
</dbReference>
<dbReference type="RefSeq" id="NP_001026855.2">
    <molecule id="Q13625-3"/>
    <property type="nucleotide sequence ID" value="NM_001031685.3"/>
</dbReference>
<dbReference type="RefSeq" id="NP_005417.1">
    <molecule id="Q13625-2"/>
    <property type="nucleotide sequence ID" value="NM_005426.3"/>
</dbReference>
<dbReference type="RefSeq" id="XP_011542571.1">
    <molecule id="Q13625-2"/>
    <property type="nucleotide sequence ID" value="XM_011544269.3"/>
</dbReference>
<dbReference type="RefSeq" id="XP_054194553.1">
    <molecule id="Q13625-2"/>
    <property type="nucleotide sequence ID" value="XM_054338578.1"/>
</dbReference>
<dbReference type="PDB" id="1YCS">
    <property type="method" value="X-ray"/>
    <property type="resolution" value="2.20 A"/>
    <property type="chains" value="B=892-1126"/>
</dbReference>
<dbReference type="PDB" id="2UWQ">
    <property type="method" value="NMR"/>
    <property type="chains" value="A=1-83"/>
</dbReference>
<dbReference type="PDB" id="4A63">
    <property type="method" value="X-ray"/>
    <property type="resolution" value="2.27 A"/>
    <property type="chains" value="B/D/F/H/J/L=892-1128"/>
</dbReference>
<dbReference type="PDB" id="4IRV">
    <property type="method" value="X-ray"/>
    <property type="resolution" value="2.04 A"/>
    <property type="chains" value="E/F/G/H=726-782"/>
</dbReference>
<dbReference type="PDB" id="6GHM">
    <property type="method" value="X-ray"/>
    <property type="resolution" value="2.15 A"/>
    <property type="chains" value="C/D=920-1128"/>
</dbReference>
<dbReference type="PDB" id="6HKP">
    <property type="method" value="X-ray"/>
    <property type="resolution" value="1.90 A"/>
    <property type="chains" value="S=970-992"/>
</dbReference>
<dbReference type="PDBsum" id="1YCS"/>
<dbReference type="PDBsum" id="2UWQ"/>
<dbReference type="PDBsum" id="4A63"/>
<dbReference type="PDBsum" id="4IRV"/>
<dbReference type="PDBsum" id="6GHM"/>
<dbReference type="PDBsum" id="6HKP"/>
<dbReference type="SASBDB" id="Q13625"/>
<dbReference type="SMR" id="Q13625"/>
<dbReference type="BioGRID" id="113012">
    <property type="interactions" value="242"/>
</dbReference>
<dbReference type="DIP" id="DIP-426N"/>
<dbReference type="FunCoup" id="Q13625">
    <property type="interactions" value="3746"/>
</dbReference>
<dbReference type="IntAct" id="Q13625">
    <property type="interactions" value="151"/>
</dbReference>
<dbReference type="MINT" id="Q13625"/>
<dbReference type="STRING" id="9606.ENSP00000341957"/>
<dbReference type="GlyCosmos" id="Q13625">
    <property type="glycosylation" value="2 sites, 1 glycan"/>
</dbReference>
<dbReference type="GlyGen" id="Q13625">
    <property type="glycosylation" value="7 sites, 1 N-linked glycan (1 site), 1 O-linked glycan (6 sites)"/>
</dbReference>
<dbReference type="iPTMnet" id="Q13625"/>
<dbReference type="MetOSite" id="Q13625"/>
<dbReference type="PhosphoSitePlus" id="Q13625"/>
<dbReference type="SwissPalm" id="Q13625"/>
<dbReference type="BioMuta" id="TP53BP2"/>
<dbReference type="DMDM" id="33860140"/>
<dbReference type="jPOST" id="Q13625"/>
<dbReference type="MassIVE" id="Q13625"/>
<dbReference type="PaxDb" id="9606-ENSP00000341957"/>
<dbReference type="PeptideAtlas" id="Q13625"/>
<dbReference type="ProteomicsDB" id="59616">
    <molecule id="Q13625-1"/>
</dbReference>
<dbReference type="ProteomicsDB" id="59617">
    <molecule id="Q13625-2"/>
</dbReference>
<dbReference type="ProteomicsDB" id="59618">
    <molecule id="Q13625-3"/>
</dbReference>
<dbReference type="Pumba" id="Q13625"/>
<dbReference type="Antibodypedia" id="20749">
    <property type="antibodies" value="283 antibodies from 34 providers"/>
</dbReference>
<dbReference type="DNASU" id="7159"/>
<dbReference type="Ensembl" id="ENST00000343537.12">
    <molecule id="Q13625-3"/>
    <property type="protein sequence ID" value="ENSP00000341957.7"/>
    <property type="gene ID" value="ENSG00000143514.18"/>
</dbReference>
<dbReference type="Ensembl" id="ENST00000391878.6">
    <molecule id="Q13625-2"/>
    <property type="protein sequence ID" value="ENSP00000375750.2"/>
    <property type="gene ID" value="ENSG00000143514.18"/>
</dbReference>
<dbReference type="GeneID" id="7159"/>
<dbReference type="KEGG" id="hsa:7159"/>
<dbReference type="MANE-Select" id="ENST00000343537.12">
    <molecule id="Q13625-3"/>
    <property type="protein sequence ID" value="ENSP00000341957.7"/>
    <property type="RefSeq nucleotide sequence ID" value="NM_001031685.3"/>
    <property type="RefSeq protein sequence ID" value="NP_001026855.2"/>
</dbReference>
<dbReference type="UCSC" id="uc001hod.4">
    <molecule id="Q13625-1"/>
    <property type="organism name" value="human"/>
</dbReference>
<dbReference type="AGR" id="HGNC:12000"/>
<dbReference type="CTD" id="7159"/>
<dbReference type="DisGeNET" id="7159"/>
<dbReference type="GeneCards" id="TP53BP2"/>
<dbReference type="HGNC" id="HGNC:12000">
    <property type="gene designation" value="TP53BP2"/>
</dbReference>
<dbReference type="HPA" id="ENSG00000143514">
    <property type="expression patterns" value="Low tissue specificity"/>
</dbReference>
<dbReference type="MIM" id="602143">
    <property type="type" value="gene"/>
</dbReference>
<dbReference type="neXtProt" id="NX_Q13625"/>
<dbReference type="OpenTargets" id="ENSG00000143514"/>
<dbReference type="PharmGKB" id="PA36681"/>
<dbReference type="VEuPathDB" id="HostDB:ENSG00000143514"/>
<dbReference type="eggNOG" id="KOG0515">
    <property type="taxonomic scope" value="Eukaryota"/>
</dbReference>
<dbReference type="GeneTree" id="ENSGT00940000153463"/>
<dbReference type="HOGENOM" id="CLU_008234_0_0_1"/>
<dbReference type="InParanoid" id="Q13625"/>
<dbReference type="OMA" id="MREGDCM"/>
<dbReference type="OrthoDB" id="10038642at2759"/>
<dbReference type="PAN-GO" id="Q13625">
    <property type="GO annotations" value="2 GO annotations based on evolutionary models"/>
</dbReference>
<dbReference type="PhylomeDB" id="Q13625"/>
<dbReference type="TreeFam" id="TF105545"/>
<dbReference type="PathwayCommons" id="Q13625"/>
<dbReference type="Reactome" id="R-HSA-139915">
    <property type="pathway name" value="Activation of PUMA and translocation to mitochondria"/>
</dbReference>
<dbReference type="Reactome" id="R-HSA-6803204">
    <property type="pathway name" value="TP53 Regulates Transcription of Genes Involved in Cytochrome C Release"/>
</dbReference>
<dbReference type="Reactome" id="R-HSA-6803205">
    <property type="pathway name" value="TP53 regulates transcription of several additional cell death genes whose specific roles in p53-dependent apoptosis remain uncertain"/>
</dbReference>
<dbReference type="Reactome" id="R-HSA-6803211">
    <property type="pathway name" value="TP53 Regulates Transcription of Death Receptors and Ligands"/>
</dbReference>
<dbReference type="Reactome" id="R-HSA-6804759">
    <property type="pathway name" value="Regulation of TP53 Activity through Association with Co-factors"/>
</dbReference>
<dbReference type="SignaLink" id="Q13625"/>
<dbReference type="SIGNOR" id="Q13625"/>
<dbReference type="BioGRID-ORCS" id="7159">
    <property type="hits" value="28 hits in 1159 CRISPR screens"/>
</dbReference>
<dbReference type="ChiTaRS" id="TP53BP2">
    <property type="organism name" value="human"/>
</dbReference>
<dbReference type="EvolutionaryTrace" id="Q13625"/>
<dbReference type="GeneWiki" id="TP53BP2"/>
<dbReference type="GenomeRNAi" id="7159"/>
<dbReference type="Pharos" id="Q13625">
    <property type="development level" value="Tbio"/>
</dbReference>
<dbReference type="PRO" id="PR:Q13625"/>
<dbReference type="Proteomes" id="UP000005640">
    <property type="component" value="Chromosome 1"/>
</dbReference>
<dbReference type="RNAct" id="Q13625">
    <property type="molecule type" value="protein"/>
</dbReference>
<dbReference type="Bgee" id="ENSG00000143514">
    <property type="expression patterns" value="Expressed in ventricular zone and 196 other cell types or tissues"/>
</dbReference>
<dbReference type="ExpressionAtlas" id="Q13625">
    <property type="expression patterns" value="baseline and differential"/>
</dbReference>
<dbReference type="GO" id="GO:0030054">
    <property type="term" value="C:cell junction"/>
    <property type="evidence" value="ECO:0000314"/>
    <property type="project" value="HPA"/>
</dbReference>
<dbReference type="GO" id="GO:0005737">
    <property type="term" value="C:cytoplasm"/>
    <property type="evidence" value="ECO:0000314"/>
    <property type="project" value="UniProtKB"/>
</dbReference>
<dbReference type="GO" id="GO:0005829">
    <property type="term" value="C:cytosol"/>
    <property type="evidence" value="ECO:0000314"/>
    <property type="project" value="HPA"/>
</dbReference>
<dbReference type="GO" id="GO:0005654">
    <property type="term" value="C:nucleoplasm"/>
    <property type="evidence" value="ECO:0000304"/>
    <property type="project" value="Reactome"/>
</dbReference>
<dbReference type="GO" id="GO:0005634">
    <property type="term" value="C:nucleus"/>
    <property type="evidence" value="ECO:0000314"/>
    <property type="project" value="UniProtKB"/>
</dbReference>
<dbReference type="GO" id="GO:0048471">
    <property type="term" value="C:perinuclear region of cytoplasm"/>
    <property type="evidence" value="ECO:0000314"/>
    <property type="project" value="AgBase"/>
</dbReference>
<dbReference type="GO" id="GO:0042802">
    <property type="term" value="F:identical protein binding"/>
    <property type="evidence" value="ECO:0000353"/>
    <property type="project" value="IntAct"/>
</dbReference>
<dbReference type="GO" id="GO:0051059">
    <property type="term" value="F:NF-kappaB binding"/>
    <property type="evidence" value="ECO:0000353"/>
    <property type="project" value="UniProtKB"/>
</dbReference>
<dbReference type="GO" id="GO:0002039">
    <property type="term" value="F:p53 binding"/>
    <property type="evidence" value="ECO:0000353"/>
    <property type="project" value="AgBase"/>
</dbReference>
<dbReference type="GO" id="GO:0042803">
    <property type="term" value="F:protein homodimerization activity"/>
    <property type="evidence" value="ECO:0000353"/>
    <property type="project" value="DisProt"/>
</dbReference>
<dbReference type="GO" id="GO:0017124">
    <property type="term" value="F:SH3 domain binding"/>
    <property type="evidence" value="ECO:0007669"/>
    <property type="project" value="UniProtKB-KW"/>
</dbReference>
<dbReference type="GO" id="GO:0072332">
    <property type="term" value="P:intrinsic apoptotic signaling pathway by p53 class mediator"/>
    <property type="evidence" value="ECO:0000314"/>
    <property type="project" value="UniProtKB"/>
</dbReference>
<dbReference type="GO" id="GO:0045786">
    <property type="term" value="P:negative regulation of cell cycle"/>
    <property type="evidence" value="ECO:0000304"/>
    <property type="project" value="UniProtKB"/>
</dbReference>
<dbReference type="GO" id="GO:1900119">
    <property type="term" value="P:positive regulation of execution phase of apoptosis"/>
    <property type="evidence" value="ECO:0000315"/>
    <property type="project" value="AgBase"/>
</dbReference>
<dbReference type="GO" id="GO:0007165">
    <property type="term" value="P:signal transduction"/>
    <property type="evidence" value="ECO:0000304"/>
    <property type="project" value="ProtInc"/>
</dbReference>
<dbReference type="CDD" id="cd17225">
    <property type="entry name" value="RA_ASPP2"/>
    <property type="match status" value="1"/>
</dbReference>
<dbReference type="CDD" id="cd11953">
    <property type="entry name" value="SH3_ASPP2"/>
    <property type="match status" value="1"/>
</dbReference>
<dbReference type="DisProt" id="DP01164"/>
<dbReference type="FunFam" id="1.25.40.20:FF:000008">
    <property type="entry name" value="Apoptosis-stimulating of p53 protein 2 isoform 1"/>
    <property type="match status" value="1"/>
</dbReference>
<dbReference type="FunFam" id="3.10.20.90:FF:000030">
    <property type="entry name" value="Apoptosis-stimulating of p53 protein 2 isoform 1"/>
    <property type="match status" value="1"/>
</dbReference>
<dbReference type="Gene3D" id="1.25.40.20">
    <property type="entry name" value="Ankyrin repeat-containing domain"/>
    <property type="match status" value="1"/>
</dbReference>
<dbReference type="Gene3D" id="3.10.20.90">
    <property type="entry name" value="Phosphatidylinositol 3-kinase Catalytic Subunit, Chain A, domain 1"/>
    <property type="match status" value="1"/>
</dbReference>
<dbReference type="IDEAL" id="IID00124"/>
<dbReference type="InterPro" id="IPR002110">
    <property type="entry name" value="Ankyrin_rpt"/>
</dbReference>
<dbReference type="InterPro" id="IPR036770">
    <property type="entry name" value="Ankyrin_rpt-contain_sf"/>
</dbReference>
<dbReference type="InterPro" id="IPR047163">
    <property type="entry name" value="ASPP1/2"/>
</dbReference>
<dbReference type="InterPro" id="IPR048942">
    <property type="entry name" value="ASPP2-like_RA"/>
</dbReference>
<dbReference type="InterPro" id="IPR047166">
    <property type="entry name" value="ASPP2_RA"/>
</dbReference>
<dbReference type="InterPro" id="IPR036028">
    <property type="entry name" value="SH3-like_dom_sf"/>
</dbReference>
<dbReference type="InterPro" id="IPR001452">
    <property type="entry name" value="SH3_domain"/>
</dbReference>
<dbReference type="InterPro" id="IPR029071">
    <property type="entry name" value="Ubiquitin-like_domsf"/>
</dbReference>
<dbReference type="PANTHER" id="PTHR24131">
    <property type="entry name" value="APOPTOSIS-STIMULATING OF P53 PROTEIN"/>
    <property type="match status" value="1"/>
</dbReference>
<dbReference type="PANTHER" id="PTHR24131:SF8">
    <property type="entry name" value="APOPTOSIS-STIMULATING OF P53 PROTEIN 2"/>
    <property type="match status" value="1"/>
</dbReference>
<dbReference type="Pfam" id="PF12796">
    <property type="entry name" value="Ank_2"/>
    <property type="match status" value="1"/>
</dbReference>
<dbReference type="Pfam" id="PF21801">
    <property type="entry name" value="ASPP2-like_RA"/>
    <property type="match status" value="1"/>
</dbReference>
<dbReference type="Pfam" id="PF00018">
    <property type="entry name" value="SH3_1"/>
    <property type="match status" value="1"/>
</dbReference>
<dbReference type="PRINTS" id="PR01887">
    <property type="entry name" value="SPECTRNALPHA"/>
</dbReference>
<dbReference type="SMART" id="SM00248">
    <property type="entry name" value="ANK"/>
    <property type="match status" value="2"/>
</dbReference>
<dbReference type="SMART" id="SM00326">
    <property type="entry name" value="SH3"/>
    <property type="match status" value="1"/>
</dbReference>
<dbReference type="SUPFAM" id="SSF48403">
    <property type="entry name" value="Ankyrin repeat"/>
    <property type="match status" value="1"/>
</dbReference>
<dbReference type="SUPFAM" id="SSF50044">
    <property type="entry name" value="SH3-domain"/>
    <property type="match status" value="1"/>
</dbReference>
<dbReference type="SUPFAM" id="SSF54236">
    <property type="entry name" value="Ubiquitin-like"/>
    <property type="match status" value="1"/>
</dbReference>
<dbReference type="PROSITE" id="PS50297">
    <property type="entry name" value="ANK_REP_REGION"/>
    <property type="match status" value="1"/>
</dbReference>
<dbReference type="PROSITE" id="PS50088">
    <property type="entry name" value="ANK_REPEAT"/>
    <property type="match status" value="2"/>
</dbReference>
<dbReference type="PROSITE" id="PS50002">
    <property type="entry name" value="SH3"/>
    <property type="match status" value="1"/>
</dbReference>
<keyword id="KW-0002">3D-structure</keyword>
<keyword id="KW-0025">Alternative splicing</keyword>
<keyword id="KW-0040">ANK repeat</keyword>
<keyword id="KW-0053">Apoptosis</keyword>
<keyword id="KW-0131">Cell cycle</keyword>
<keyword id="KW-0963">Cytoplasm</keyword>
<keyword id="KW-0539">Nucleus</keyword>
<keyword id="KW-0597">Phosphoprotein</keyword>
<keyword id="KW-1267">Proteomics identification</keyword>
<keyword id="KW-1185">Reference proteome</keyword>
<keyword id="KW-0677">Repeat</keyword>
<keyword id="KW-0728">SH3 domain</keyword>
<keyword id="KW-0729">SH3-binding</keyword>
<feature type="chain" id="PRO_0000066964" description="Apoptosis-stimulating of p53 protein 2">
    <location>
        <begin position="1"/>
        <end position="1128"/>
    </location>
</feature>
<feature type="repeat" description="ANK 1">
    <location>
        <begin position="926"/>
        <end position="957"/>
    </location>
</feature>
<feature type="repeat" description="ANK 2">
    <location>
        <begin position="958"/>
        <end position="990"/>
    </location>
</feature>
<feature type="repeat" description="ANK 3">
    <location>
        <begin position="991"/>
        <end position="1024"/>
    </location>
</feature>
<feature type="repeat" description="ANK 4">
    <location>
        <begin position="1025"/>
        <end position="1067"/>
    </location>
</feature>
<feature type="domain" description="SH3" evidence="3">
    <location>
        <begin position="1057"/>
        <end position="1119"/>
    </location>
</feature>
<feature type="region of interest" description="Disordered" evidence="4">
    <location>
        <begin position="86"/>
        <end position="106"/>
    </location>
</feature>
<feature type="region of interest" description="Disordered" evidence="4">
    <location>
        <begin position="322"/>
        <end position="341"/>
    </location>
</feature>
<feature type="region of interest" description="Interaction with APPBP1" evidence="11">
    <location>
        <begin position="332"/>
        <end position="348"/>
    </location>
</feature>
<feature type="region of interest" description="Disordered" evidence="4">
    <location>
        <begin position="494"/>
        <end position="598"/>
    </location>
</feature>
<feature type="region of interest" description="Disordered" evidence="4">
    <location>
        <begin position="655"/>
        <end position="706"/>
    </location>
</feature>
<feature type="region of interest" description="Disordered" evidence="4">
    <location>
        <begin position="724"/>
        <end position="748"/>
    </location>
</feature>
<feature type="region of interest" description="Disordered" evidence="4">
    <location>
        <begin position="802"/>
        <end position="909"/>
    </location>
</feature>
<feature type="region of interest" description="Mediates interaction with APC2" evidence="7">
    <location>
        <begin position="876"/>
        <end position="1128"/>
    </location>
</feature>
<feature type="short sequence motif" description="SH3-binding" evidence="2">
    <location>
        <begin position="866"/>
        <end position="875"/>
    </location>
</feature>
<feature type="compositionally biased region" description="Polar residues" evidence="4">
    <location>
        <begin position="322"/>
        <end position="339"/>
    </location>
</feature>
<feature type="compositionally biased region" description="Polar residues" evidence="4">
    <location>
        <begin position="528"/>
        <end position="537"/>
    </location>
</feature>
<feature type="compositionally biased region" description="Polar residues" evidence="4">
    <location>
        <begin position="558"/>
        <end position="575"/>
    </location>
</feature>
<feature type="compositionally biased region" description="Polar residues" evidence="4">
    <location>
        <begin position="655"/>
        <end position="670"/>
    </location>
</feature>
<feature type="compositionally biased region" description="Low complexity" evidence="4">
    <location>
        <begin position="840"/>
        <end position="849"/>
    </location>
</feature>
<feature type="compositionally biased region" description="Pro residues" evidence="4">
    <location>
        <begin position="867"/>
        <end position="876"/>
    </location>
</feature>
<feature type="modified residue" description="Phosphoserine" evidence="18 19 20 21 22">
    <location>
        <position position="480"/>
    </location>
</feature>
<feature type="modified residue" description="Phosphoserine" evidence="18 20 22">
    <location>
        <position position="556"/>
    </location>
</feature>
<feature type="modified residue" description="Phosphoserine" evidence="22">
    <location>
        <position position="569"/>
    </location>
</feature>
<feature type="modified residue" description="Phosphoserine" evidence="20">
    <location>
        <position position="572"/>
    </location>
</feature>
<feature type="modified residue" description="Phosphoserine" evidence="22">
    <location>
        <position position="576"/>
    </location>
</feature>
<feature type="modified residue" description="Phosphoserine" evidence="1">
    <location>
        <position position="698"/>
    </location>
</feature>
<feature type="modified residue" description="Phosphoserine" evidence="22">
    <location>
        <position position="714"/>
    </location>
</feature>
<feature type="modified residue" description="Phosphoserine" evidence="22">
    <location>
        <position position="737"/>
    </location>
</feature>
<feature type="splice variant" id="VSP_008010" description="In isoform 2." evidence="16">
    <location>
        <begin position="1"/>
        <end position="123"/>
    </location>
</feature>
<feature type="splice variant" id="VSP_043509" description="In isoform 3." evidence="15">
    <original>M</original>
    <variation>MRFGSKM</variation>
    <location>
        <position position="1"/>
    </location>
</feature>
<feature type="mutagenesis site" description="Loss of interaction with APC2." evidence="7">
    <original>W</original>
    <variation>K</variation>
    <location>
        <position position="1098"/>
    </location>
</feature>
<feature type="strand" evidence="24">
    <location>
        <begin position="2"/>
        <end position="9"/>
    </location>
</feature>
<feature type="strand" evidence="24">
    <location>
        <begin position="17"/>
        <end position="22"/>
    </location>
</feature>
<feature type="helix" evidence="24">
    <location>
        <begin position="29"/>
        <end position="34"/>
    </location>
</feature>
<feature type="strand" evidence="24">
    <location>
        <begin position="40"/>
        <end position="42"/>
    </location>
</feature>
<feature type="strand" evidence="24">
    <location>
        <begin position="44"/>
        <end position="49"/>
    </location>
</feature>
<feature type="strand" evidence="24">
    <location>
        <begin position="52"/>
        <end position="56"/>
    </location>
</feature>
<feature type="helix" evidence="24">
    <location>
        <begin position="62"/>
        <end position="69"/>
    </location>
</feature>
<feature type="helix" evidence="24">
    <location>
        <begin position="73"/>
        <end position="75"/>
    </location>
</feature>
<feature type="strand" evidence="24">
    <location>
        <begin position="77"/>
        <end position="81"/>
    </location>
</feature>
<feature type="helix" evidence="26">
    <location>
        <begin position="747"/>
        <end position="760"/>
    </location>
</feature>
<feature type="turn" evidence="26">
    <location>
        <begin position="761"/>
        <end position="764"/>
    </location>
</feature>
<feature type="helix" evidence="27">
    <location>
        <begin position="926"/>
        <end position="936"/>
    </location>
</feature>
<feature type="helix" evidence="27">
    <location>
        <begin position="939"/>
        <end position="945"/>
    </location>
</feature>
<feature type="turn" evidence="27">
    <location>
        <begin position="946"/>
        <end position="948"/>
    </location>
</feature>
<feature type="helix" evidence="27">
    <location>
        <begin position="962"/>
        <end position="968"/>
    </location>
</feature>
<feature type="turn" evidence="28">
    <location>
        <begin position="976"/>
        <end position="979"/>
    </location>
</feature>
<feature type="helix" evidence="27">
    <location>
        <begin position="995"/>
        <end position="1001"/>
    </location>
</feature>
<feature type="helix" evidence="27">
    <location>
        <begin position="1005"/>
        <end position="1012"/>
    </location>
</feature>
<feature type="turn" evidence="27">
    <location>
        <begin position="1013"/>
        <end position="1015"/>
    </location>
</feature>
<feature type="turn" evidence="27">
    <location>
        <begin position="1023"/>
        <end position="1025"/>
    </location>
</feature>
<feature type="helix" evidence="27">
    <location>
        <begin position="1030"/>
        <end position="1032"/>
    </location>
</feature>
<feature type="strand" evidence="23">
    <location>
        <begin position="1035"/>
        <end position="1037"/>
    </location>
</feature>
<feature type="helix" evidence="27">
    <location>
        <begin position="1040"/>
        <end position="1053"/>
    </location>
</feature>
<feature type="turn" evidence="27">
    <location>
        <begin position="1054"/>
        <end position="1056"/>
    </location>
</feature>
<feature type="helix" evidence="27">
    <location>
        <begin position="1057"/>
        <end position="1060"/>
    </location>
</feature>
<feature type="strand" evidence="27">
    <location>
        <begin position="1061"/>
        <end position="1064"/>
    </location>
</feature>
<feature type="strand" evidence="27">
    <location>
        <begin position="1083"/>
        <end position="1090"/>
    </location>
</feature>
<feature type="strand" evidence="25">
    <location>
        <begin position="1091"/>
        <end position="1093"/>
    </location>
</feature>
<feature type="strand" evidence="27">
    <location>
        <begin position="1095"/>
        <end position="1102"/>
    </location>
</feature>
<feature type="strand" evidence="27">
    <location>
        <begin position="1105"/>
        <end position="1110"/>
    </location>
</feature>
<feature type="helix" evidence="27">
    <location>
        <begin position="1111"/>
        <end position="1113"/>
    </location>
</feature>
<feature type="strand" evidence="27">
    <location>
        <begin position="1114"/>
        <end position="1117"/>
    </location>
</feature>
<sequence length="1128" mass="125616">MMPMFLTVYLSNNEQHFTEVPVTPETICRDVVDLCKEPGESDCHLAEVWCGSERPVADNERMFDVLQRFGSQRNEVRFFLRHERPPGRDIVSGPRSQDPSLKRNGVKVPGEYRRKENGVNSPRMDLTLAELQEMASRQQQQIEAQQQLLATKEQRLKFLKQQDQRQQQQVAEQEKLKRLKEIAENQEAKLKKVRALKGHVEQKRLSNGKLVEEIEQMNNLFQQKQRELVLAVSKVEELTRQLEMLKNGRIDSHHDNQSAVAELDRLYKELQLRNKLNQEQNAKLQQQRECLNKRNSEVAVMDKRVNELRDRLWKKKAALQQKENLPVSSDGNLPQQAASAPSRVAAVGPYIQSSTMPRMPSRPELLVKPALPDGSLVIQASEGPMKIQTLPNMRSGAASQTKGSKIHPVGPDWSPSNADLFPSQGSASVPQSTGNALDQVDDGEVPLREKEKKVRPFSMFDAVDQSNAPPSFGTLRKNQSSEDILRDAQVANKNVAKVPPPVPTKPKQINLPYFGQTNQPPSDIKPDGSSQQLSTVVPSMGTKPKPAGQQPRVLLSPSIPSVGQDQTLSPGSKQESPPAAAVRPFTPQPSKDTLLPPFRKPQTVAASSIYSMYTQQQAPGKNFQQAVQSALTKTHTRGPHFSSVYGKPVIAAAQNQQQHPENIYSNSQGKPGSPEPETEPVSSVQENHENERIPRPLSPTKLLPFLSNPYRNQSDADLEALRKKLSNAPRPLKKRSSITEPEGPNGPNIQKLLYQRTTIAAMETISVPSYPSKSASVTASSESPVEIQNPYLHVEPEKEVVSLVPESLSPEDVGNASTENSDMPAPSPGLDYEPEGVPDNSPNLQNNPEEPNPEAPHVLDVYLEEYPPYPPPPYPSGEPEGPGEDSVSMRPPEITGQVSLPPGKRTNLRKTGSERIAHGMRVKFNPLALLLDSSLEGEFDLVQRIIYEVDDPSLPNDEGITALHNAVCAGHTEIVKFLVQFGVNVNAADSDGWTPLHCAASCNNVQVCKFLVESGAAVFAMTYSDMQTAADKCEEMEEGYTQCSQFLYGVQEKMGIMNKGVIYALWDYEPQNDDELPMKEGDCMTIIHREDEDEIEWWWARLNDKEGYVPRNLLGLYPRIKPRQRSLA</sequence>
<protein>
    <recommendedName>
        <fullName>Apoptosis-stimulating of p53 protein 2</fullName>
    </recommendedName>
    <alternativeName>
        <fullName>Bcl2-binding protein</fullName>
        <shortName>Bbp</shortName>
    </alternativeName>
    <alternativeName>
        <fullName>Renal carcinoma antigen NY-REN-51</fullName>
    </alternativeName>
    <alternativeName>
        <fullName>Tumor suppressor p53-binding protein 2</fullName>
        <shortName>53BP2</shortName>
        <shortName>p53-binding protein 2</shortName>
        <shortName>p53BP2</shortName>
    </alternativeName>
</protein>
<reference key="1">
    <citation type="journal article" date="1996" name="Mol. Cell. Biol.">
        <title>The p53-binding protein 53BP2 also interacts with Bcl2 and impedes cell cycle progression at G2/M.</title>
        <authorList>
            <person name="Naumovski L."/>
            <person name="Cleary M.L."/>
        </authorList>
    </citation>
    <scope>NUCLEOTIDE SEQUENCE [MRNA] (ISOFORM 2)</scope>
    <scope>INTERACTION WITH BCL2</scope>
</reference>
<reference key="2">
    <citation type="journal article" date="2001" name="Mol. Cell">
        <title>ASPP proteins specifically stimulate the apoptotic function of p53.</title>
        <authorList>
            <person name="Samuels-Lev Y."/>
            <person name="O'Connor D.J."/>
            <person name="Bergamaschi D."/>
            <person name="Trigiante G."/>
            <person name="Hsieh J.-K."/>
            <person name="Zhong S."/>
            <person name="Campargue I."/>
            <person name="Naumovski L."/>
            <person name="Crook T."/>
            <person name="Lu X."/>
        </authorList>
    </citation>
    <scope>NUCLEOTIDE SEQUENCE [MRNA] (ISOFORM 1)</scope>
    <scope>FUNCTION</scope>
    <scope>TISSUE SPECIFICITY</scope>
    <scope>INTERACTION WITH TP53</scope>
</reference>
<reference key="3">
    <citation type="journal article" date="2004" name="Nat. Genet.">
        <title>Complete sequencing and characterization of 21,243 full-length human cDNAs.</title>
        <authorList>
            <person name="Ota T."/>
            <person name="Suzuki Y."/>
            <person name="Nishikawa T."/>
            <person name="Otsuki T."/>
            <person name="Sugiyama T."/>
            <person name="Irie R."/>
            <person name="Wakamatsu A."/>
            <person name="Hayashi K."/>
            <person name="Sato H."/>
            <person name="Nagai K."/>
            <person name="Kimura K."/>
            <person name="Makita H."/>
            <person name="Sekine M."/>
            <person name="Obayashi M."/>
            <person name="Nishi T."/>
            <person name="Shibahara T."/>
            <person name="Tanaka T."/>
            <person name="Ishii S."/>
            <person name="Yamamoto J."/>
            <person name="Saito K."/>
            <person name="Kawai Y."/>
            <person name="Isono Y."/>
            <person name="Nakamura Y."/>
            <person name="Nagahari K."/>
            <person name="Murakami K."/>
            <person name="Yasuda T."/>
            <person name="Iwayanagi T."/>
            <person name="Wagatsuma M."/>
            <person name="Shiratori A."/>
            <person name="Sudo H."/>
            <person name="Hosoiri T."/>
            <person name="Kaku Y."/>
            <person name="Kodaira H."/>
            <person name="Kondo H."/>
            <person name="Sugawara M."/>
            <person name="Takahashi M."/>
            <person name="Kanda K."/>
            <person name="Yokoi T."/>
            <person name="Furuya T."/>
            <person name="Kikkawa E."/>
            <person name="Omura Y."/>
            <person name="Abe K."/>
            <person name="Kamihara K."/>
            <person name="Katsuta N."/>
            <person name="Sato K."/>
            <person name="Tanikawa M."/>
            <person name="Yamazaki M."/>
            <person name="Ninomiya K."/>
            <person name="Ishibashi T."/>
            <person name="Yamashita H."/>
            <person name="Murakawa K."/>
            <person name="Fujimori K."/>
            <person name="Tanai H."/>
            <person name="Kimata M."/>
            <person name="Watanabe M."/>
            <person name="Hiraoka S."/>
            <person name="Chiba Y."/>
            <person name="Ishida S."/>
            <person name="Ono Y."/>
            <person name="Takiguchi S."/>
            <person name="Watanabe S."/>
            <person name="Yosida M."/>
            <person name="Hotuta T."/>
            <person name="Kusano J."/>
            <person name="Kanehori K."/>
            <person name="Takahashi-Fujii A."/>
            <person name="Hara H."/>
            <person name="Tanase T.-O."/>
            <person name="Nomura Y."/>
            <person name="Togiya S."/>
            <person name="Komai F."/>
            <person name="Hara R."/>
            <person name="Takeuchi K."/>
            <person name="Arita M."/>
            <person name="Imose N."/>
            <person name="Musashino K."/>
            <person name="Yuuki H."/>
            <person name="Oshima A."/>
            <person name="Sasaki N."/>
            <person name="Aotsuka S."/>
            <person name="Yoshikawa Y."/>
            <person name="Matsunawa H."/>
            <person name="Ichihara T."/>
            <person name="Shiohata N."/>
            <person name="Sano S."/>
            <person name="Moriya S."/>
            <person name="Momiyama H."/>
            <person name="Satoh N."/>
            <person name="Takami S."/>
            <person name="Terashima Y."/>
            <person name="Suzuki O."/>
            <person name="Nakagawa S."/>
            <person name="Senoh A."/>
            <person name="Mizoguchi H."/>
            <person name="Goto Y."/>
            <person name="Shimizu F."/>
            <person name="Wakebe H."/>
            <person name="Hishigaki H."/>
            <person name="Watanabe T."/>
            <person name="Sugiyama A."/>
            <person name="Takemoto M."/>
            <person name="Kawakami B."/>
            <person name="Yamazaki M."/>
            <person name="Watanabe K."/>
            <person name="Kumagai A."/>
            <person name="Itakura S."/>
            <person name="Fukuzumi Y."/>
            <person name="Fujimori Y."/>
            <person name="Komiyama M."/>
            <person name="Tashiro H."/>
            <person name="Tanigami A."/>
            <person name="Fujiwara T."/>
            <person name="Ono T."/>
            <person name="Yamada K."/>
            <person name="Fujii Y."/>
            <person name="Ozaki K."/>
            <person name="Hirao M."/>
            <person name="Ohmori Y."/>
            <person name="Kawabata A."/>
            <person name="Hikiji T."/>
            <person name="Kobatake N."/>
            <person name="Inagaki H."/>
            <person name="Ikema Y."/>
            <person name="Okamoto S."/>
            <person name="Okitani R."/>
            <person name="Kawakami T."/>
            <person name="Noguchi S."/>
            <person name="Itoh T."/>
            <person name="Shigeta K."/>
            <person name="Senba T."/>
            <person name="Matsumura K."/>
            <person name="Nakajima Y."/>
            <person name="Mizuno T."/>
            <person name="Morinaga M."/>
            <person name="Sasaki M."/>
            <person name="Togashi T."/>
            <person name="Oyama M."/>
            <person name="Hata H."/>
            <person name="Watanabe M."/>
            <person name="Komatsu T."/>
            <person name="Mizushima-Sugano J."/>
            <person name="Satoh T."/>
            <person name="Shirai Y."/>
            <person name="Takahashi Y."/>
            <person name="Nakagawa K."/>
            <person name="Okumura K."/>
            <person name="Nagase T."/>
            <person name="Nomura N."/>
            <person name="Kikuchi H."/>
            <person name="Masuho Y."/>
            <person name="Yamashita R."/>
            <person name="Nakai K."/>
            <person name="Yada T."/>
            <person name="Nakamura Y."/>
            <person name="Ohara O."/>
            <person name="Isogai T."/>
            <person name="Sugano S."/>
        </authorList>
    </citation>
    <scope>NUCLEOTIDE SEQUENCE [LARGE SCALE MRNA] (ISOFORM 3)</scope>
    <source>
        <tissue>Amygdala</tissue>
    </source>
</reference>
<reference key="4">
    <citation type="journal article" date="2006" name="Nature">
        <title>The DNA sequence and biological annotation of human chromosome 1.</title>
        <authorList>
            <person name="Gregory S.G."/>
            <person name="Barlow K.F."/>
            <person name="McLay K.E."/>
            <person name="Kaul R."/>
            <person name="Swarbreck D."/>
            <person name="Dunham A."/>
            <person name="Scott C.E."/>
            <person name="Howe K.L."/>
            <person name="Woodfine K."/>
            <person name="Spencer C.C.A."/>
            <person name="Jones M.C."/>
            <person name="Gillson C."/>
            <person name="Searle S."/>
            <person name="Zhou Y."/>
            <person name="Kokocinski F."/>
            <person name="McDonald L."/>
            <person name="Evans R."/>
            <person name="Phillips K."/>
            <person name="Atkinson A."/>
            <person name="Cooper R."/>
            <person name="Jones C."/>
            <person name="Hall R.E."/>
            <person name="Andrews T.D."/>
            <person name="Lloyd C."/>
            <person name="Ainscough R."/>
            <person name="Almeida J.P."/>
            <person name="Ambrose K.D."/>
            <person name="Anderson F."/>
            <person name="Andrew R.W."/>
            <person name="Ashwell R.I.S."/>
            <person name="Aubin K."/>
            <person name="Babbage A.K."/>
            <person name="Bagguley C.L."/>
            <person name="Bailey J."/>
            <person name="Beasley H."/>
            <person name="Bethel G."/>
            <person name="Bird C.P."/>
            <person name="Bray-Allen S."/>
            <person name="Brown J.Y."/>
            <person name="Brown A.J."/>
            <person name="Buckley D."/>
            <person name="Burton J."/>
            <person name="Bye J."/>
            <person name="Carder C."/>
            <person name="Chapman J.C."/>
            <person name="Clark S.Y."/>
            <person name="Clarke G."/>
            <person name="Clee C."/>
            <person name="Cobley V."/>
            <person name="Collier R.E."/>
            <person name="Corby N."/>
            <person name="Coville G.J."/>
            <person name="Davies J."/>
            <person name="Deadman R."/>
            <person name="Dunn M."/>
            <person name="Earthrowl M."/>
            <person name="Ellington A.G."/>
            <person name="Errington H."/>
            <person name="Frankish A."/>
            <person name="Frankland J."/>
            <person name="French L."/>
            <person name="Garner P."/>
            <person name="Garnett J."/>
            <person name="Gay L."/>
            <person name="Ghori M.R.J."/>
            <person name="Gibson R."/>
            <person name="Gilby L.M."/>
            <person name="Gillett W."/>
            <person name="Glithero R.J."/>
            <person name="Grafham D.V."/>
            <person name="Griffiths C."/>
            <person name="Griffiths-Jones S."/>
            <person name="Grocock R."/>
            <person name="Hammond S."/>
            <person name="Harrison E.S.I."/>
            <person name="Hart E."/>
            <person name="Haugen E."/>
            <person name="Heath P.D."/>
            <person name="Holmes S."/>
            <person name="Holt K."/>
            <person name="Howden P.J."/>
            <person name="Hunt A.R."/>
            <person name="Hunt S.E."/>
            <person name="Hunter G."/>
            <person name="Isherwood J."/>
            <person name="James R."/>
            <person name="Johnson C."/>
            <person name="Johnson D."/>
            <person name="Joy A."/>
            <person name="Kay M."/>
            <person name="Kershaw J.K."/>
            <person name="Kibukawa M."/>
            <person name="Kimberley A.M."/>
            <person name="King A."/>
            <person name="Knights A.J."/>
            <person name="Lad H."/>
            <person name="Laird G."/>
            <person name="Lawlor S."/>
            <person name="Leongamornlert D.A."/>
            <person name="Lloyd D.M."/>
            <person name="Loveland J."/>
            <person name="Lovell J."/>
            <person name="Lush M.J."/>
            <person name="Lyne R."/>
            <person name="Martin S."/>
            <person name="Mashreghi-Mohammadi M."/>
            <person name="Matthews L."/>
            <person name="Matthews N.S.W."/>
            <person name="McLaren S."/>
            <person name="Milne S."/>
            <person name="Mistry S."/>
            <person name="Moore M.J.F."/>
            <person name="Nickerson T."/>
            <person name="O'Dell C.N."/>
            <person name="Oliver K."/>
            <person name="Palmeiri A."/>
            <person name="Palmer S.A."/>
            <person name="Parker A."/>
            <person name="Patel D."/>
            <person name="Pearce A.V."/>
            <person name="Peck A.I."/>
            <person name="Pelan S."/>
            <person name="Phelps K."/>
            <person name="Phillimore B.J."/>
            <person name="Plumb R."/>
            <person name="Rajan J."/>
            <person name="Raymond C."/>
            <person name="Rouse G."/>
            <person name="Saenphimmachak C."/>
            <person name="Sehra H.K."/>
            <person name="Sheridan E."/>
            <person name="Shownkeen R."/>
            <person name="Sims S."/>
            <person name="Skuce C.D."/>
            <person name="Smith M."/>
            <person name="Steward C."/>
            <person name="Subramanian S."/>
            <person name="Sycamore N."/>
            <person name="Tracey A."/>
            <person name="Tromans A."/>
            <person name="Van Helmond Z."/>
            <person name="Wall M."/>
            <person name="Wallis J.M."/>
            <person name="White S."/>
            <person name="Whitehead S.L."/>
            <person name="Wilkinson J.E."/>
            <person name="Willey D.L."/>
            <person name="Williams H."/>
            <person name="Wilming L."/>
            <person name="Wray P.W."/>
            <person name="Wu Z."/>
            <person name="Coulson A."/>
            <person name="Vaudin M."/>
            <person name="Sulston J.E."/>
            <person name="Durbin R.M."/>
            <person name="Hubbard T."/>
            <person name="Wooster R."/>
            <person name="Dunham I."/>
            <person name="Carter N.P."/>
            <person name="McVean G."/>
            <person name="Ross M.T."/>
            <person name="Harrow J."/>
            <person name="Olson M.V."/>
            <person name="Beck S."/>
            <person name="Rogers J."/>
            <person name="Bentley D.R."/>
        </authorList>
    </citation>
    <scope>NUCLEOTIDE SEQUENCE [LARGE SCALE GENOMIC DNA]</scope>
</reference>
<reference key="5">
    <citation type="journal article" date="2004" name="Genome Res.">
        <title>The status, quality, and expansion of the NIH full-length cDNA project: the Mammalian Gene Collection (MGC).</title>
        <authorList>
            <consortium name="The MGC Project Team"/>
        </authorList>
    </citation>
    <scope>NUCLEOTIDE SEQUENCE [LARGE SCALE MRNA] (ISOFORM 1)</scope>
    <source>
        <tissue>Testis</tissue>
        <tissue>Uterus</tissue>
    </source>
</reference>
<reference key="6">
    <citation type="journal article" date="1994" name="Proc. Natl. Acad. Sci. U.S.A.">
        <title>Two cellular proteins that bind to wild-type but not mutant p53.</title>
        <authorList>
            <person name="Iwabuchi K."/>
            <person name="Bartel P.L."/>
            <person name="Li B."/>
            <person name="Marraccino R."/>
            <person name="Fields S."/>
        </authorList>
    </citation>
    <scope>NUCLEOTIDE SEQUENCE [MRNA] OF 600-1128</scope>
    <scope>INTERACTION WITH TP53</scope>
</reference>
<reference key="7">
    <citation type="journal article" date="1999" name="Int. J. Cancer">
        <title>Antigens recognized by autologous antibody in patients with renal-cell carcinoma.</title>
        <authorList>
            <person name="Scanlan M.J."/>
            <person name="Gordan J.D."/>
            <person name="Williamson B."/>
            <person name="Stockert E."/>
            <person name="Bander N.H."/>
            <person name="Jongeneel C.V."/>
            <person name="Gure A.O."/>
            <person name="Jaeger D."/>
            <person name="Jaeger E."/>
            <person name="Knuth A."/>
            <person name="Chen Y.-T."/>
            <person name="Old L.J."/>
        </authorList>
    </citation>
    <scope>IDENTIFICATION AS A RENAL CANCER ANTIGEN</scope>
    <source>
        <tissue>Renal cell carcinoma</tissue>
    </source>
</reference>
<reference key="8">
    <citation type="journal article" date="1999" name="Oncogene">
        <title>NF-kappaB subunit p65 binds to 53BP2 and inhibits cell death induced by 53BP2.</title>
        <authorList>
            <person name="Yang J.-P."/>
            <person name="Hori M."/>
            <person name="Takahashi N."/>
            <person name="Kawabe T."/>
            <person name="Kato H."/>
            <person name="Okamoto T."/>
        </authorList>
    </citation>
    <scope>TISSUE SPECIFICITY</scope>
    <scope>INTERACTION WITH RELA</scope>
</reference>
<reference key="9">
    <citation type="journal article" date="2000" name="Cancer Res.">
        <title>APCL, a central nervous system-specific homologue of adenomatous polyposis coli tumor suppressor, binds to p53-binding protein 2 and translocates it to the perinucleus.</title>
        <authorList>
            <person name="Nakagawa H."/>
            <person name="Koyama K."/>
            <person name="Murata Y."/>
            <person name="Morito M."/>
            <person name="Akiyama T."/>
            <person name="Nakamura Y."/>
        </authorList>
    </citation>
    <scope>INTERACTION WITH APC2</scope>
    <scope>MUTAGENESIS OF TRP-1098</scope>
    <scope>SUBCELLULAR LOCATION</scope>
</reference>
<reference key="10">
    <citation type="journal article" date="2000" name="Mol. Cell. Biol.">
        <title>Proapoptotic p53-interacting protein 53BP2 is induced by UV irradiation but suppressed by p53.</title>
        <authorList>
            <person name="Lopez C.D."/>
            <person name="Ao Y."/>
            <person name="Rohde L.H."/>
            <person name="Perez T.D."/>
            <person name="O'Connor D.J."/>
            <person name="Lu X."/>
            <person name="Ford J.M."/>
            <person name="Naumovski L."/>
        </authorList>
    </citation>
    <scope>INDUCTION</scope>
</reference>
<reference key="11">
    <citation type="journal article" date="2000" name="FEBS Lett.">
        <title>Aberrant overexpression of 53BP2 mRNA in lung cancer cell lines.</title>
        <authorList>
            <person name="Mori T."/>
            <person name="Okamoto H."/>
            <person name="Takahashi N."/>
            <person name="Ueda R."/>
            <person name="Okamoto T."/>
        </authorList>
    </citation>
    <scope>TISSUE SPECIFICITY</scope>
</reference>
<reference key="12">
    <citation type="journal article" date="2003" name="J. Neurochem.">
        <title>ASPP2 inhibits APP-BP1-mediated NEDD8 conjugation to cullin-1 and decreases APP-BP1-induced cell proliferation and neuronal apoptosis.</title>
        <authorList>
            <person name="Chen Y."/>
            <person name="Liu W."/>
            <person name="Naumovski L."/>
            <person name="Neve R.L."/>
        </authorList>
    </citation>
    <scope>FUNCTION</scope>
    <scope>INTERACTION WITH NAE1</scope>
</reference>
<reference key="13">
    <citation type="journal article" date="2003" name="Nat. Genet.">
        <title>iASPP oncoprotein is a key inhibitor of p53 conserved from worm to human.</title>
        <authorList>
            <person name="Bergamaschi D."/>
            <person name="Samuels Y."/>
            <person name="O'Neil N.J."/>
            <person name="Trigiante G."/>
            <person name="Crook T."/>
            <person name="Hsieh J.-K."/>
            <person name="O'Connor D.J."/>
            <person name="Zhong S."/>
            <person name="Campargue I."/>
            <person name="Tomlinson M.L."/>
            <person name="Kuwabara P.E."/>
            <person name="Lu X."/>
        </authorList>
    </citation>
    <scope>FUNCTION</scope>
    <scope>INTERACTION WITH TP53</scope>
</reference>
<reference key="14">
    <citation type="journal article" date="2004" name="Anal. Chem.">
        <title>Robust phosphoproteomic profiling of tyrosine phosphorylation sites from human T cells using immobilized metal affinity chromatography and tandem mass spectrometry.</title>
        <authorList>
            <person name="Brill L.M."/>
            <person name="Salomon A.R."/>
            <person name="Ficarro S.B."/>
            <person name="Mukherji M."/>
            <person name="Stettler-Gill M."/>
            <person name="Peters E.C."/>
        </authorList>
    </citation>
    <scope>IDENTIFICATION BY MASS SPECTROMETRY [LARGE SCALE ANALYSIS]</scope>
    <source>
        <tissue>Leukemic T-cell</tissue>
    </source>
</reference>
<reference key="15">
    <citation type="journal article" date="2008" name="Proc. Natl. Acad. Sci. U.S.A.">
        <title>A quantitative atlas of mitotic phosphorylation.</title>
        <authorList>
            <person name="Dephoure N."/>
            <person name="Zhou C."/>
            <person name="Villen J."/>
            <person name="Beausoleil S.A."/>
            <person name="Bakalarski C.E."/>
            <person name="Elledge S.J."/>
            <person name="Gygi S.P."/>
        </authorList>
    </citation>
    <scope>PHOSPHORYLATION [LARGE SCALE ANALYSIS] AT SER-480 AND SER-556</scope>
    <scope>IDENTIFICATION BY MASS SPECTROMETRY [LARGE SCALE ANALYSIS]</scope>
    <source>
        <tissue>Cervix carcinoma</tissue>
    </source>
</reference>
<reference key="16">
    <citation type="journal article" date="2009" name="Anal. Chem.">
        <title>Lys-N and trypsin cover complementary parts of the phosphoproteome in a refined SCX-based approach.</title>
        <authorList>
            <person name="Gauci S."/>
            <person name="Helbig A.O."/>
            <person name="Slijper M."/>
            <person name="Krijgsveld J."/>
            <person name="Heck A.J."/>
            <person name="Mohammed S."/>
        </authorList>
    </citation>
    <scope>IDENTIFICATION BY MASS SPECTROMETRY [LARGE SCALE ANALYSIS]</scope>
</reference>
<reference key="17">
    <citation type="journal article" date="2009" name="Oncogene">
        <title>The DEAD box protein Ddx42p modulates the function of ASPP2, a stimulator of apoptosis.</title>
        <authorList>
            <person name="Uhlmann-Schiffler H."/>
            <person name="Kiermayer S."/>
            <person name="Stahl H."/>
        </authorList>
    </citation>
    <scope>FUNCTION</scope>
    <scope>INTERACTION WITH DDX42</scope>
    <scope>SUBCELLULAR LOCATION</scope>
</reference>
<reference key="18">
    <citation type="journal article" date="2009" name="Sci. Signal.">
        <title>Quantitative phosphoproteomic analysis of T cell receptor signaling reveals system-wide modulation of protein-protein interactions.</title>
        <authorList>
            <person name="Mayya V."/>
            <person name="Lundgren D.H."/>
            <person name="Hwang S.-I."/>
            <person name="Rezaul K."/>
            <person name="Wu L."/>
            <person name="Eng J.K."/>
            <person name="Rodionov V."/>
            <person name="Han D.K."/>
        </authorList>
    </citation>
    <scope>PHOSPHORYLATION [LARGE SCALE ANALYSIS] AT SER-480</scope>
    <scope>IDENTIFICATION BY MASS SPECTROMETRY [LARGE SCALE ANALYSIS]</scope>
    <source>
        <tissue>Leukemic T-cell</tissue>
    </source>
</reference>
<reference key="19">
    <citation type="journal article" date="2010" name="Sci. Signal.">
        <title>Quantitative phosphoproteomics reveals widespread full phosphorylation site occupancy during mitosis.</title>
        <authorList>
            <person name="Olsen J.V."/>
            <person name="Vermeulen M."/>
            <person name="Santamaria A."/>
            <person name="Kumar C."/>
            <person name="Miller M.L."/>
            <person name="Jensen L.J."/>
            <person name="Gnad F."/>
            <person name="Cox J."/>
            <person name="Jensen T.S."/>
            <person name="Nigg E.A."/>
            <person name="Brunak S."/>
            <person name="Mann M."/>
        </authorList>
    </citation>
    <scope>PHOSPHORYLATION [LARGE SCALE ANALYSIS] AT SER-480; SER-556 AND SER-572</scope>
    <scope>IDENTIFICATION BY MASS SPECTROMETRY [LARGE SCALE ANALYSIS]</scope>
    <source>
        <tissue>Cervix carcinoma</tissue>
    </source>
</reference>
<reference key="20">
    <citation type="journal article" date="2011" name="BMC Syst. Biol.">
        <title>Initial characterization of the human central proteome.</title>
        <authorList>
            <person name="Burkard T.R."/>
            <person name="Planyavsky M."/>
            <person name="Kaupe I."/>
            <person name="Breitwieser F.P."/>
            <person name="Buerckstuemmer T."/>
            <person name="Bennett K.L."/>
            <person name="Superti-Furga G."/>
            <person name="Colinge J."/>
        </authorList>
    </citation>
    <scope>IDENTIFICATION BY MASS SPECTROMETRY [LARGE SCALE ANALYSIS]</scope>
</reference>
<reference key="21">
    <citation type="journal article" date="2011" name="Sci. Signal.">
        <title>System-wide temporal characterization of the proteome and phosphoproteome of human embryonic stem cell differentiation.</title>
        <authorList>
            <person name="Rigbolt K.T."/>
            <person name="Prokhorova T.A."/>
            <person name="Akimov V."/>
            <person name="Henningsen J."/>
            <person name="Johansen P.T."/>
            <person name="Kratchmarova I."/>
            <person name="Kassem M."/>
            <person name="Mann M."/>
            <person name="Olsen J.V."/>
            <person name="Blagoev B."/>
        </authorList>
    </citation>
    <scope>PHOSPHORYLATION [LARGE SCALE ANALYSIS] AT SER-480</scope>
    <scope>IDENTIFICATION BY MASS SPECTROMETRY [LARGE SCALE ANALYSIS]</scope>
</reference>
<reference key="22">
    <citation type="journal article" date="2013" name="J. Proteome Res.">
        <title>Toward a comprehensive characterization of a human cancer cell phosphoproteome.</title>
        <authorList>
            <person name="Zhou H."/>
            <person name="Di Palma S."/>
            <person name="Preisinger C."/>
            <person name="Peng M."/>
            <person name="Polat A.N."/>
            <person name="Heck A.J."/>
            <person name="Mohammed S."/>
        </authorList>
    </citation>
    <scope>PHOSPHORYLATION [LARGE SCALE ANALYSIS] AT SER-480; SER-556; SER-569; SER-576; SER-714 AND SER-737</scope>
    <scope>IDENTIFICATION BY MASS SPECTROMETRY [LARGE SCALE ANALYSIS]</scope>
    <source>
        <tissue>Cervix carcinoma</tissue>
        <tissue>Erythroleukemia</tissue>
    </source>
</reference>
<reference key="23">
    <citation type="journal article" date="2014" name="BMC Bioinformatics">
        <title>Identifying tandem Ankyrin repeats in protein structures.</title>
        <authorList>
            <person name="Chakrabarty B."/>
            <person name="Parekh N."/>
        </authorList>
    </citation>
    <scope>ANKYRIN REPEATS</scope>
</reference>
<reference key="24">
    <citation type="journal article" date="1996" name="Science">
        <title>Structure of the p53 tumor suppressor bound to the ankyrin and SH3 domains of 53BP2.</title>
        <authorList>
            <person name="Gorina S."/>
            <person name="Pavletich N.P."/>
        </authorList>
    </citation>
    <scope>X-RAY CRYSTALLOGRAPHY (2.2 ANGSTROMS) OF 892-1128</scope>
</reference>
<reference key="25">
    <citation type="journal article" date="2007" name="J. Mol. Biol.">
        <title>Solution structure of ASPP2 N-terminal domain (N-ASPP2) reveals a ubiquitin-like fold.</title>
        <authorList>
            <person name="Tidow H."/>
            <person name="Andreeva A."/>
            <person name="Rutherford T.J."/>
            <person name="Fersht A.R."/>
        </authorList>
    </citation>
    <scope>STRUCTURE BY NMR OF 1-83</scope>
</reference>
<accession>Q13625</accession>
<accession>B4DG66</accession>
<accession>Q12892</accession>
<accession>Q86X75</accession>
<accession>Q96KQ3</accession>
<gene>
    <name type="primary">TP53BP2</name>
    <name type="synonym">ASPP2</name>
    <name type="synonym">BBP</name>
</gene>
<evidence type="ECO:0000250" key="1">
    <source>
        <dbReference type="UniProtKB" id="Q8CG79"/>
    </source>
</evidence>
<evidence type="ECO:0000255" key="2"/>
<evidence type="ECO:0000255" key="3">
    <source>
        <dbReference type="PROSITE-ProRule" id="PRU00192"/>
    </source>
</evidence>
<evidence type="ECO:0000256" key="4">
    <source>
        <dbReference type="SAM" id="MobiDB-lite"/>
    </source>
</evidence>
<evidence type="ECO:0000269" key="5">
    <source>
    </source>
</evidence>
<evidence type="ECO:0000269" key="6">
    <source>
    </source>
</evidence>
<evidence type="ECO:0000269" key="7">
    <source>
    </source>
</evidence>
<evidence type="ECO:0000269" key="8">
    <source>
    </source>
</evidence>
<evidence type="ECO:0000269" key="9">
    <source>
    </source>
</evidence>
<evidence type="ECO:0000269" key="10">
    <source>
    </source>
</evidence>
<evidence type="ECO:0000269" key="11">
    <source>
    </source>
</evidence>
<evidence type="ECO:0000269" key="12">
    <source>
    </source>
</evidence>
<evidence type="ECO:0000269" key="13">
    <source>
    </source>
</evidence>
<evidence type="ECO:0000269" key="14">
    <source>
    </source>
</evidence>
<evidence type="ECO:0000303" key="15">
    <source>
    </source>
</evidence>
<evidence type="ECO:0000303" key="16">
    <source>
    </source>
</evidence>
<evidence type="ECO:0000305" key="17"/>
<evidence type="ECO:0007744" key="18">
    <source>
    </source>
</evidence>
<evidence type="ECO:0007744" key="19">
    <source>
    </source>
</evidence>
<evidence type="ECO:0007744" key="20">
    <source>
    </source>
</evidence>
<evidence type="ECO:0007744" key="21">
    <source>
    </source>
</evidence>
<evidence type="ECO:0007744" key="22">
    <source>
    </source>
</evidence>
<evidence type="ECO:0007829" key="23">
    <source>
        <dbReference type="PDB" id="1YCS"/>
    </source>
</evidence>
<evidence type="ECO:0007829" key="24">
    <source>
        <dbReference type="PDB" id="2UWQ"/>
    </source>
</evidence>
<evidence type="ECO:0007829" key="25">
    <source>
        <dbReference type="PDB" id="4A63"/>
    </source>
</evidence>
<evidence type="ECO:0007829" key="26">
    <source>
        <dbReference type="PDB" id="4IRV"/>
    </source>
</evidence>
<evidence type="ECO:0007829" key="27">
    <source>
        <dbReference type="PDB" id="6GHM"/>
    </source>
</evidence>
<evidence type="ECO:0007829" key="28">
    <source>
        <dbReference type="PDB" id="6HKP"/>
    </source>
</evidence>